<protein>
    <recommendedName>
        <fullName evidence="9">Large ribosomal subunit protein uL4m</fullName>
    </recommendedName>
    <alternativeName>
        <fullName>54S ribosomal protein YmL6, mitochondrial</fullName>
    </alternativeName>
</protein>
<name>RL4P_YEAST</name>
<sequence length="286" mass="31970">MTIKRNLVKTLQSIRYQATTATAHAESTLNPLPNAAIPPKYALVTVRSFPSLEPLTFVPVPTSTVAAPLRRDILWRAVVYENDNRRVGASNPPGRSENGFSRRKLMPQKGSGRARVGDANSPTRHNGGRALARTAPNDYTTELPSKVYSMAFNNALSHQYKSGKLFVIGGEKVDLISPTPELDLNRLDLVNTNTVEGKEIFEGEVIFRKFLEEFQLKGKRLLFITDKTREGLIKSSDPYKQKVDVIQKELVEVNDILRAQAVFIELEALEYLAMAHQKEILHSVSN</sequence>
<feature type="transit peptide" description="Mitochondrion" evidence="5">
    <location>
        <begin position="1"/>
        <end position="26"/>
    </location>
</feature>
<feature type="chain" id="PRO_0000030541" description="Large ribosomal subunit protein uL4m">
    <location>
        <begin position="27"/>
        <end position="286"/>
    </location>
</feature>
<feature type="region of interest" description="Disordered" evidence="1">
    <location>
        <begin position="85"/>
        <end position="132"/>
    </location>
</feature>
<feature type="sequence conflict" description="In Ref. 3; AA sequence." evidence="10" ref="3">
    <original>N</original>
    <variation>S</variation>
    <location>
        <position position="30"/>
    </location>
</feature>
<feature type="sequence conflict" description="In Ref. 3; AA sequence." evidence="10" ref="3">
    <original>A</original>
    <variation>I</variation>
    <location>
        <position position="35"/>
    </location>
</feature>
<feature type="sequence conflict" description="In Ref. 3; AA sequence." evidence="10" ref="3">
    <original>E</original>
    <variation>P</variation>
    <location>
        <position position="53"/>
    </location>
</feature>
<feature type="sequence conflict" description="In Ref. 4; AA sequence." evidence="10" ref="4">
    <original>S</original>
    <variation>K</variation>
    <location>
        <position position="121"/>
    </location>
</feature>
<feature type="sequence conflict" description="In Ref. 4; AA sequence." evidence="10" ref="4">
    <original>L</original>
    <variation>F</variation>
    <location>
        <position position="156"/>
    </location>
</feature>
<feature type="sequence conflict" description="In Ref. 4; AA sequence." evidence="10" ref="4">
    <original>E</original>
    <variation>C</variation>
    <location>
        <position position="249"/>
    </location>
</feature>
<organism>
    <name type="scientific">Saccharomyces cerevisiae (strain ATCC 204508 / S288c)</name>
    <name type="common">Baker's yeast</name>
    <dbReference type="NCBI Taxonomy" id="559292"/>
    <lineage>
        <taxon>Eukaryota</taxon>
        <taxon>Fungi</taxon>
        <taxon>Dikarya</taxon>
        <taxon>Ascomycota</taxon>
        <taxon>Saccharomycotina</taxon>
        <taxon>Saccharomycetes</taxon>
        <taxon>Saccharomycetales</taxon>
        <taxon>Saccharomycetaceae</taxon>
        <taxon>Saccharomyces</taxon>
    </lineage>
</organism>
<gene>
    <name type="primary">YML6</name>
    <name type="ordered locus">YML025C</name>
</gene>
<accession>P51998</accession>
<accession>D6VZE9</accession>
<evidence type="ECO:0000256" key="1">
    <source>
        <dbReference type="SAM" id="MobiDB-lite"/>
    </source>
</evidence>
<evidence type="ECO:0000269" key="2">
    <source>
    </source>
</evidence>
<evidence type="ECO:0000269" key="3">
    <source>
    </source>
</evidence>
<evidence type="ECO:0000269" key="4">
    <source>
    </source>
</evidence>
<evidence type="ECO:0000269" key="5">
    <source>
    </source>
</evidence>
<evidence type="ECO:0000269" key="6">
    <source>
    </source>
</evidence>
<evidence type="ECO:0000269" key="7">
    <source>
    </source>
</evidence>
<evidence type="ECO:0000269" key="8">
    <source>
    </source>
</evidence>
<evidence type="ECO:0000303" key="9">
    <source>
    </source>
</evidence>
<evidence type="ECO:0000305" key="10"/>
<evidence type="ECO:0000305" key="11">
    <source>
    </source>
</evidence>
<evidence type="ECO:0000305" key="12">
    <source>
    </source>
</evidence>
<reference key="1">
    <citation type="journal article" date="1997" name="Nature">
        <title>The nucleotide sequence of Saccharomyces cerevisiae chromosome XIII.</title>
        <authorList>
            <person name="Bowman S."/>
            <person name="Churcher C.M."/>
            <person name="Badcock K."/>
            <person name="Brown D."/>
            <person name="Chillingworth T."/>
            <person name="Connor R."/>
            <person name="Dedman K."/>
            <person name="Devlin K."/>
            <person name="Gentles S."/>
            <person name="Hamlin N."/>
            <person name="Hunt S."/>
            <person name="Jagels K."/>
            <person name="Lye G."/>
            <person name="Moule S."/>
            <person name="Odell C."/>
            <person name="Pearson D."/>
            <person name="Rajandream M.A."/>
            <person name="Rice P."/>
            <person name="Skelton J."/>
            <person name="Walsh S.V."/>
            <person name="Whitehead S."/>
            <person name="Barrell B.G."/>
        </authorList>
    </citation>
    <scope>NUCLEOTIDE SEQUENCE [LARGE SCALE GENOMIC DNA]</scope>
    <source>
        <strain>ATCC 204508 / S288c</strain>
    </source>
</reference>
<reference key="2">
    <citation type="journal article" date="2014" name="G3 (Bethesda)">
        <title>The reference genome sequence of Saccharomyces cerevisiae: Then and now.</title>
        <authorList>
            <person name="Engel S.R."/>
            <person name="Dietrich F.S."/>
            <person name="Fisk D.G."/>
            <person name="Binkley G."/>
            <person name="Balakrishnan R."/>
            <person name="Costanzo M.C."/>
            <person name="Dwight S.S."/>
            <person name="Hitz B.C."/>
            <person name="Karra K."/>
            <person name="Nash R.S."/>
            <person name="Weng S."/>
            <person name="Wong E.D."/>
            <person name="Lloyd P."/>
            <person name="Skrzypek M.S."/>
            <person name="Miyasato S.R."/>
            <person name="Simison M."/>
            <person name="Cherry J.M."/>
        </authorList>
    </citation>
    <scope>GENOME REANNOTATION</scope>
    <source>
        <strain>ATCC 204508 / S288c</strain>
    </source>
</reference>
<reference key="3">
    <citation type="journal article" date="1991" name="FEBS Lett.">
        <title>Extended N-terminal sequencing of proteins of the large ribosomal subunit from yeast mitochondria.</title>
        <authorList>
            <person name="Grohmann L."/>
            <person name="Graack H.-R."/>
            <person name="Kruft V."/>
            <person name="Choli T."/>
            <person name="Goldschmidt-Reisin S."/>
            <person name="Kitakawa M."/>
        </authorList>
    </citation>
    <scope>PROTEIN SEQUENCE OF 27-53</scope>
    <scope>SUBUNIT</scope>
    <source>
        <strain>07173</strain>
    </source>
</reference>
<reference key="4">
    <citation type="journal article" date="1997" name="Eur. J. Biochem.">
        <title>Identification and characterization of the genes for mitochondrial ribosomal proteins of Saccharomyces cerevisiae.</title>
        <authorList>
            <person name="Kitakawa M."/>
            <person name="Graack H.-R."/>
            <person name="Grohmann L."/>
            <person name="Goldschmidt-Reisin S."/>
            <person name="Herfurth E."/>
            <person name="Wittmann-Liebold B."/>
            <person name="Nishimura T."/>
            <person name="Isono K."/>
        </authorList>
    </citation>
    <scope>PROTEIN SEQUENCE OF 110-121; 147-156; 241-249 AND 279-286</scope>
    <scope>SUBUNIT</scope>
    <source>
        <strain>07173</strain>
    </source>
</reference>
<reference key="5">
    <citation type="journal article" date="2003" name="Nature">
        <title>Global analysis of protein localization in budding yeast.</title>
        <authorList>
            <person name="Huh W.-K."/>
            <person name="Falvo J.V."/>
            <person name="Gerke L.C."/>
            <person name="Carroll A.S."/>
            <person name="Howson R.W."/>
            <person name="Weissman J.S."/>
            <person name="O'Shea E.K."/>
        </authorList>
    </citation>
    <scope>SUBCELLULAR LOCATION [LARGE SCALE ANALYSIS]</scope>
</reference>
<reference key="6">
    <citation type="journal article" date="2003" name="Nature">
        <title>Global analysis of protein expression in yeast.</title>
        <authorList>
            <person name="Ghaemmaghami S."/>
            <person name="Huh W.-K."/>
            <person name="Bower K."/>
            <person name="Howson R.W."/>
            <person name="Belle A."/>
            <person name="Dephoure N."/>
            <person name="O'Shea E.K."/>
            <person name="Weissman J.S."/>
        </authorList>
    </citation>
    <scope>LEVEL OF PROTEIN EXPRESSION [LARGE SCALE ANALYSIS]</scope>
</reference>
<reference key="7">
    <citation type="journal article" date="2003" name="Proc. Natl. Acad. Sci. U.S.A.">
        <title>The proteome of Saccharomyces cerevisiae mitochondria.</title>
        <authorList>
            <person name="Sickmann A."/>
            <person name="Reinders J."/>
            <person name="Wagner Y."/>
            <person name="Joppich C."/>
            <person name="Zahedi R.P."/>
            <person name="Meyer H.E."/>
            <person name="Schoenfisch B."/>
            <person name="Perschil I."/>
            <person name="Chacinska A."/>
            <person name="Guiard B."/>
            <person name="Rehling P."/>
            <person name="Pfanner N."/>
            <person name="Meisinger C."/>
        </authorList>
    </citation>
    <scope>SUBCELLULAR LOCATION [LARGE SCALE ANALYSIS]</scope>
    <source>
        <strain>ATCC 76625 / YPH499</strain>
    </source>
</reference>
<reference key="8">
    <citation type="journal article" date="2015" name="Nat. Commun.">
        <title>Organization of the mitochondrial translation machinery studied in situ by cryoelectron tomography.</title>
        <authorList>
            <person name="Pfeffer S."/>
            <person name="Woellhaf M.W."/>
            <person name="Herrmann J.M."/>
            <person name="Forster F."/>
        </authorList>
    </citation>
    <scope>SUBCELLULAR LOCATION</scope>
</reference>
<reference key="9">
    <citation type="journal article" date="2014" name="Science">
        <title>Structure of the yeast mitochondrial large ribosomal subunit.</title>
        <authorList>
            <person name="Amunts A."/>
            <person name="Brown A."/>
            <person name="Bai X.C."/>
            <person name="Llacer J.L."/>
            <person name="Hussain T."/>
            <person name="Emsley P."/>
            <person name="Long F."/>
            <person name="Murshudov G."/>
            <person name="Scheres S.H."/>
            <person name="Ramakrishnan V."/>
        </authorList>
    </citation>
    <scope>STRUCTURE BY ELECTRON MICROSCOPY (3.20 ANGSTROMS)</scope>
    <scope>SUBUNIT</scope>
</reference>
<keyword id="KW-0002">3D-structure</keyword>
<keyword id="KW-0903">Direct protein sequencing</keyword>
<keyword id="KW-0496">Mitochondrion</keyword>
<keyword id="KW-1185">Reference proteome</keyword>
<keyword id="KW-0687">Ribonucleoprotein</keyword>
<keyword id="KW-0689">Ribosomal protein</keyword>
<keyword id="KW-0809">Transit peptide</keyword>
<comment type="function">
    <text evidence="11 12">Component of the mitochondrial ribosome (mitoribosome), a dedicated translation machinery responsible for the synthesis of mitochondrial genome-encoded proteins, including at least some of the essential transmembrane subunits of the mitochondrial respiratory chain. The mitoribosomes are attached to the mitochondrial inner membrane and translation products are cotranslationally integrated into the membrane.</text>
</comment>
<comment type="subunit">
    <text evidence="5 6 8">Component of the mitochondrial large ribosomal subunit (mt-LSU). Mature yeast 74S mitochondrial ribosomes consist of a small (37S) and a large (54S) subunit. The 37S small subunit contains a 15S ribosomal RNA (15S mt-rRNA) and 34 different proteins. The 54S large subunit contains a 21S rRNA (21S mt-rRNA) and 46 different proteins.</text>
</comment>
<comment type="subcellular location">
    <subcellularLocation>
        <location evidence="2 4">Mitochondrion</location>
    </subcellularLocation>
    <text evidence="7">Mitoribosomes are tethered to the mitochondrial inner membrane and spatially aligned with the membrane insertion machinery through two distinct membrane contact sites, formed by the 21S rRNA expansion segment 96-ES1 and the inner membrane protein MBA1.</text>
</comment>
<comment type="miscellaneous">
    <text evidence="3">Present with 1200 molecules/cell in log phase SD medium.</text>
</comment>
<comment type="similarity">
    <text evidence="10">Belongs to the universal ribosomal protein uL4 family.</text>
</comment>
<dbReference type="EMBL" id="Z46659">
    <property type="protein sequence ID" value="CAA86630.1"/>
    <property type="molecule type" value="Genomic_DNA"/>
</dbReference>
<dbReference type="EMBL" id="BK006946">
    <property type="protein sequence ID" value="DAA09873.1"/>
    <property type="molecule type" value="Genomic_DNA"/>
</dbReference>
<dbReference type="PIR" id="S50887">
    <property type="entry name" value="S50887"/>
</dbReference>
<dbReference type="RefSeq" id="NP_013687.1">
    <property type="nucleotide sequence ID" value="NM_001182383.1"/>
</dbReference>
<dbReference type="PDB" id="3J6B">
    <property type="method" value="EM"/>
    <property type="resolution" value="3.20 A"/>
    <property type="chains" value="D=1-286"/>
</dbReference>
<dbReference type="PDB" id="5MRC">
    <property type="method" value="EM"/>
    <property type="resolution" value="3.25 A"/>
    <property type="chains" value="D=29-280"/>
</dbReference>
<dbReference type="PDB" id="5MRE">
    <property type="method" value="EM"/>
    <property type="resolution" value="3.75 A"/>
    <property type="chains" value="D=29-280"/>
</dbReference>
<dbReference type="PDB" id="5MRF">
    <property type="method" value="EM"/>
    <property type="resolution" value="4.97 A"/>
    <property type="chains" value="D=29-280"/>
</dbReference>
<dbReference type="PDBsum" id="3J6B"/>
<dbReference type="PDBsum" id="5MRC"/>
<dbReference type="PDBsum" id="5MRE"/>
<dbReference type="PDBsum" id="5MRF"/>
<dbReference type="EMDB" id="EMD-3551"/>
<dbReference type="EMDB" id="EMD-3552"/>
<dbReference type="EMDB" id="EMD-3553"/>
<dbReference type="SMR" id="P51998"/>
<dbReference type="BioGRID" id="35144">
    <property type="interactions" value="124"/>
</dbReference>
<dbReference type="ComplexPortal" id="CPX-1602">
    <property type="entry name" value="54S mitochondrial large ribosomal subunit"/>
</dbReference>
<dbReference type="DIP" id="DIP-6670N"/>
<dbReference type="FunCoup" id="P51998">
    <property type="interactions" value="455"/>
</dbReference>
<dbReference type="IntAct" id="P51998">
    <property type="interactions" value="87"/>
</dbReference>
<dbReference type="MINT" id="P51998"/>
<dbReference type="STRING" id="4932.YML025C"/>
<dbReference type="GlyGen" id="P51998">
    <property type="glycosylation" value="1 site"/>
</dbReference>
<dbReference type="iPTMnet" id="P51998"/>
<dbReference type="PaxDb" id="4932-YML025C"/>
<dbReference type="PeptideAtlas" id="P51998"/>
<dbReference type="EnsemblFungi" id="YML025C_mRNA">
    <property type="protein sequence ID" value="YML025C"/>
    <property type="gene ID" value="YML025C"/>
</dbReference>
<dbReference type="GeneID" id="854983"/>
<dbReference type="KEGG" id="sce:YML025C"/>
<dbReference type="AGR" id="SGD:S000004487"/>
<dbReference type="SGD" id="S000004487">
    <property type="gene designation" value="YML6"/>
</dbReference>
<dbReference type="VEuPathDB" id="FungiDB:YML025C"/>
<dbReference type="eggNOG" id="KOG1624">
    <property type="taxonomic scope" value="Eukaryota"/>
</dbReference>
<dbReference type="GeneTree" id="ENSGT00390000014512"/>
<dbReference type="HOGENOM" id="CLU_041575_4_2_1"/>
<dbReference type="InParanoid" id="P51998"/>
<dbReference type="OMA" id="KTFGPHP"/>
<dbReference type="OrthoDB" id="275876at2759"/>
<dbReference type="BioCyc" id="YEAST:G3O-32627-MONOMER"/>
<dbReference type="BioGRID-ORCS" id="854983">
    <property type="hits" value="7 hits in 10 CRISPR screens"/>
</dbReference>
<dbReference type="PRO" id="PR:P51998"/>
<dbReference type="Proteomes" id="UP000002311">
    <property type="component" value="Chromosome XIII"/>
</dbReference>
<dbReference type="RNAct" id="P51998">
    <property type="molecule type" value="protein"/>
</dbReference>
<dbReference type="GO" id="GO:0005743">
    <property type="term" value="C:mitochondrial inner membrane"/>
    <property type="evidence" value="ECO:0000303"/>
    <property type="project" value="ComplexPortal"/>
</dbReference>
<dbReference type="GO" id="GO:0005762">
    <property type="term" value="C:mitochondrial large ribosomal subunit"/>
    <property type="evidence" value="ECO:0000314"/>
    <property type="project" value="SGD"/>
</dbReference>
<dbReference type="GO" id="GO:0005739">
    <property type="term" value="C:mitochondrion"/>
    <property type="evidence" value="ECO:0007005"/>
    <property type="project" value="SGD"/>
</dbReference>
<dbReference type="GO" id="GO:0003735">
    <property type="term" value="F:structural constituent of ribosome"/>
    <property type="evidence" value="ECO:0000314"/>
    <property type="project" value="SGD"/>
</dbReference>
<dbReference type="GO" id="GO:0032543">
    <property type="term" value="P:mitochondrial translation"/>
    <property type="evidence" value="ECO:0000303"/>
    <property type="project" value="ComplexPortal"/>
</dbReference>
<dbReference type="FunFam" id="3.40.1370.10:FF:000018">
    <property type="entry name" value="Mitochondrial 54S ribosomal protein YmL6"/>
    <property type="match status" value="1"/>
</dbReference>
<dbReference type="Gene3D" id="3.40.1370.10">
    <property type="match status" value="1"/>
</dbReference>
<dbReference type="InterPro" id="IPR002136">
    <property type="entry name" value="Ribosomal_uL4"/>
</dbReference>
<dbReference type="InterPro" id="IPR013005">
    <property type="entry name" value="Ribosomal_uL4-like"/>
</dbReference>
<dbReference type="InterPro" id="IPR023574">
    <property type="entry name" value="Ribosomal_uL4_dom_sf"/>
</dbReference>
<dbReference type="PANTHER" id="PTHR10746">
    <property type="entry name" value="50S RIBOSOMAL PROTEIN L4"/>
    <property type="match status" value="1"/>
</dbReference>
<dbReference type="PANTHER" id="PTHR10746:SF6">
    <property type="entry name" value="LARGE RIBOSOMAL SUBUNIT PROTEIN UL4M"/>
    <property type="match status" value="1"/>
</dbReference>
<dbReference type="Pfam" id="PF00573">
    <property type="entry name" value="Ribosomal_L4"/>
    <property type="match status" value="1"/>
</dbReference>
<dbReference type="SUPFAM" id="SSF52166">
    <property type="entry name" value="Ribosomal protein L4"/>
    <property type="match status" value="1"/>
</dbReference>
<proteinExistence type="evidence at protein level"/>